<feature type="chain" id="PRO_0000330317" description="Minor histocompatibility protein HB-1">
    <location>
        <begin position="1"/>
        <end position="41"/>
    </location>
</feature>
<feature type="peptide" id="PRO_0000330318" description="Minor histocompatibility antigen HB-1">
    <location>
        <begin position="9"/>
        <end position="18"/>
    </location>
</feature>
<feature type="region of interest" description="Loss of recognition by cytotoxic T lymphocyte (CTL)">
    <location>
        <begin position="9"/>
        <end position="17"/>
    </location>
</feature>
<feature type="sequence variant" id="VAR_042698" description="In allele HB-1Y; loss of CTL recognition for epitope HB-1. No influence on HLA-B/HLA-B44 binding, nor on the processing by the proteasome; dbSNP:rs161557." evidence="4">
    <original>H</original>
    <variation>Y</variation>
    <location>
        <position position="16"/>
    </location>
</feature>
<feature type="mutagenesis site" description="Decreased CTL recognition." evidence="1">
    <original>E</original>
    <variation>A</variation>
    <location>
        <position position="9"/>
    </location>
</feature>
<feature type="mutagenesis site" description="Decreased CTL recognition." evidence="1">
    <original>E</original>
    <variation>A</variation>
    <location>
        <position position="10"/>
    </location>
</feature>
<feature type="mutagenesis site" description="Complete loss of CTL recognition." evidence="1">
    <original>K</original>
    <variation>A</variation>
    <location>
        <position position="11"/>
    </location>
</feature>
<feature type="mutagenesis site" description="Complete loss of CTL recognition." evidence="1">
    <original>R</original>
    <variation>A</variation>
    <location>
        <position position="12"/>
    </location>
</feature>
<feature type="mutagenesis site" description="Complete loss of CTL recognition." evidence="1">
    <original>G</original>
    <variation>A</variation>
    <location>
        <position position="13"/>
    </location>
</feature>
<feature type="mutagenesis site" description="Complete loss of CTL recognition." evidence="1">
    <original>S</original>
    <variation>A</variation>
    <location>
        <position position="14"/>
    </location>
</feature>
<feature type="mutagenesis site" description="Complete loss of CTL recognition." evidence="1">
    <original>L</original>
    <variation>A</variation>
    <location>
        <position position="15"/>
    </location>
</feature>
<feature type="mutagenesis site" description="Complete loss of CTL recognition." evidence="1">
    <original>H</original>
    <variation>A</variation>
    <location>
        <position position="16"/>
    </location>
</feature>
<feature type="mutagenesis site" description="CTL recognition." evidence="1">
    <original>H</original>
    <variation>R</variation>
    <location>
        <position position="16"/>
    </location>
</feature>
<feature type="mutagenesis site" description="Decreased CTL recognition." evidence="1">
    <original>V</original>
    <variation>A</variation>
    <location>
        <position position="17"/>
    </location>
</feature>
<feature type="mutagenesis site" description="Complete loss of CTL recognition." evidence="1">
    <original>W</original>
    <variation>A</variation>
    <location>
        <position position="18"/>
    </location>
</feature>
<evidence type="ECO:0000269" key="1">
    <source>
    </source>
</evidence>
<evidence type="ECO:0000269" key="2">
    <source>
    </source>
</evidence>
<evidence type="ECO:0000269" key="3">
    <source>
    </source>
</evidence>
<evidence type="ECO:0000269" key="4">
    <source>
    </source>
</evidence>
<evidence type="ECO:0000305" key="5"/>
<evidence type="ECO:0000305" key="6">
    <source>
    </source>
</evidence>
<organism>
    <name type="scientific">Homo sapiens</name>
    <name type="common">Human</name>
    <dbReference type="NCBI Taxonomy" id="9606"/>
    <lineage>
        <taxon>Eukaryota</taxon>
        <taxon>Metazoa</taxon>
        <taxon>Chordata</taxon>
        <taxon>Craniata</taxon>
        <taxon>Vertebrata</taxon>
        <taxon>Euteleostomi</taxon>
        <taxon>Mammalia</taxon>
        <taxon>Eutheria</taxon>
        <taxon>Euarchontoglires</taxon>
        <taxon>Primates</taxon>
        <taxon>Haplorrhini</taxon>
        <taxon>Catarrhini</taxon>
        <taxon>Hominidae</taxon>
        <taxon>Homo</taxon>
    </lineage>
</organism>
<comment type="function">
    <text evidence="2 3 4">Precursor of the histocomplatibility antigen HB-1. More generally, minor histocomplatibility antigens (mHags) refer to immunogenic peptide which, when complexed with MHC, can generate an immune response after recognition by specific T-cells. The peptides are derived from polymorphic intracellular proteins, which are cleaved by normal pathways of antigen processing. The binding of these peptides to MHC class I or class II molecules and its expression on the cell surface can stimulate T-cell responses and thereby trigger graft rejection or graft-versus-host disease (GVHD) after hematopoietic stem cell transplantation from HLA-identical sibling donor. GVHD is a frequent complication after bone marrow transplantation (BMT), due to mismatch of minor histocomplatibility antigen in HLA-matched sibling marrow transplants. HB-1 is presented on the cell surface by MHC class I HLA-B44. This complex specifically elicits donor-cytotoxic T lymphocyte (CTL) reactivity in B-cell acute lymphoblastic leukemia (B-ALL) after treatment by HLA-identical allogenic bone marrow transplantation (BMT). It induces cell recognition and lysis by CTL. However, HB-1 restricted expression in B-ALL cells and not in normal tissues may allow a specific CTL reactivity against B-ALL without the risk of evoking graft-versus-host disease.</text>
</comment>
<comment type="subunit">
    <text>HB-1 forms a complex with MHC class I HLA-B44.</text>
</comment>
<comment type="tissue specificity">
    <text evidence="3 4">Expressed in acute lymphoblastic leukemia B-cells and Epstein-Barr virus-transformed B-cells.</text>
</comment>
<comment type="caution">
    <text evidence="6">This sequence containing mHag HB-1 may not represent the full-length protein, because functional domains are absent in this short gene product.</text>
</comment>
<comment type="caution">
    <text evidence="5">PubMed:9892612 postulated that the initiator methionine is coded by a non-canonical CTG leucine codon.</text>
</comment>
<name>HMHB1_HUMAN</name>
<reference key="1">
    <citation type="journal article" date="1999" name="J. Exp. Med.">
        <title>A human minor histocompatibility antigen specific for B cell acute lymphoblastic leukemia.</title>
        <authorList>
            <person name="Dolstra H."/>
            <person name="Fredrix H."/>
            <person name="Maas F."/>
            <person name="Coulie P.G."/>
            <person name="Brasseur F."/>
            <person name="Mensink E."/>
            <person name="Adema G.J."/>
            <person name="de Witte T.M."/>
            <person name="Figdor C.G."/>
            <person name="van de Wiel-van Kemenade E."/>
        </authorList>
    </citation>
    <scope>NUCLEOTIDE SEQUENCE [MRNA]</scope>
    <scope>PROTEIN SEQUENCE OF 9-18</scope>
    <scope>TISSUE SPECIFICITY</scope>
    <scope>FUNCTION</scope>
    <scope>VARIANT TYR-16</scope>
</reference>
<reference key="2">
    <citation type="journal article" date="2004" name="Genome Res.">
        <title>The status, quality, and expansion of the NIH full-length cDNA project: the Mammalian Gene Collection (MGC).</title>
        <authorList>
            <consortium name="The MGC Project Team"/>
        </authorList>
    </citation>
    <scope>NUCLEOTIDE SEQUENCE [LARGE SCALE MRNA]</scope>
</reference>
<reference key="3">
    <citation type="submission" date="2000-02" db="EMBL/GenBank/DDBJ databases">
        <title>Genomic identification of the HB-1 gene.</title>
        <authorList>
            <person name="Balas A."/>
            <person name="Aviles M.J."/>
            <person name="Vicario J.L."/>
        </authorList>
    </citation>
    <scope>NUCLEOTIDE SEQUENCE [GENOMIC DNA] OF 1-36</scope>
</reference>
<reference key="4">
    <citation type="journal article" date="1997" name="J. Immunol.">
        <title>Recognition of a B cell leukemia-associated minor histocompatibility antigen by CTL.</title>
        <authorList>
            <person name="Dolstra H."/>
            <person name="Fredrix H."/>
            <person name="Preijers F."/>
            <person name="Goulmy E."/>
            <person name="Figdor C.G."/>
            <person name="de Witte T.M."/>
            <person name="van de Wiel-van Kemenade E."/>
        </authorList>
    </citation>
    <scope>FUNCTION</scope>
    <scope>TISSUE SPECIFICITY</scope>
</reference>
<reference key="5">
    <citation type="journal article" date="2002" name="Eur. J. Immunol.">
        <title>Bi-directional allelic recognition of the human minor histocompatibility antigen HB-1 by cytotoxic T lymphocytes.</title>
        <authorList>
            <person name="Dolstra H."/>
            <person name="de Rijke B."/>
            <person name="Fredrix H."/>
            <person name="Balas A."/>
            <person name="Maas F."/>
            <person name="Scherpen F."/>
            <person name="Aviles M.J."/>
            <person name="Vicario J.L."/>
            <person name="Beekman N.J."/>
            <person name="Ossendorp F."/>
            <person name="de Witte T.M."/>
            <person name="van de Wiel-van Kemenade E."/>
        </authorList>
    </citation>
    <scope>INTERACTION WITH HLA-B44</scope>
    <scope>MUTAGENESIS OF GLU-9; GLU-10; LYS-11; ARG-12; GLY-13; SER-14; LEU-15; HIS-16; VAL-17 AND TRP-18</scope>
</reference>
<reference key="6">
    <citation type="journal article" date="2004" name="Trends Immunol.">
        <title>Minor histocompatibility antigens -- big in tumour therapy.</title>
        <authorList>
            <person name="Spierings E."/>
            <person name="Wieles B."/>
            <person name="Goulmy E."/>
        </authorList>
    </citation>
    <scope>FUNCTION</scope>
</reference>
<sequence length="41" mass="4965">MEEQPECREEKRGSLHVWKSELVEVEDDVYLRHSSSLTYRL</sequence>
<keyword id="KW-1064">Adaptive immunity</keyword>
<keyword id="KW-0903">Direct protein sequencing</keyword>
<keyword id="KW-0391">Immunity</keyword>
<keyword id="KW-1185">Reference proteome</keyword>
<gene>
    <name type="primary">HMHB1</name>
</gene>
<dbReference type="EMBL" id="AF103884">
    <property type="protein sequence ID" value="AAC78642.1"/>
    <property type="molecule type" value="mRNA"/>
</dbReference>
<dbReference type="EMBL" id="BC104412">
    <property type="protein sequence ID" value="AAI04413.1"/>
    <property type="molecule type" value="mRNA"/>
</dbReference>
<dbReference type="EMBL" id="BC104413">
    <property type="protein sequence ID" value="AAI04414.1"/>
    <property type="molecule type" value="mRNA"/>
</dbReference>
<dbReference type="EMBL" id="AF233094">
    <property type="protein sequence ID" value="AAF81110.1"/>
    <property type="molecule type" value="Genomic_DNA"/>
</dbReference>
<dbReference type="CCDS" id="CCDS43376.1"/>
<dbReference type="RefSeq" id="NP_067005.1">
    <property type="nucleotide sequence ID" value="NM_021182.3"/>
</dbReference>
<dbReference type="STRING" id="9606.ENSP00000289448"/>
<dbReference type="iPTMnet" id="O97980"/>
<dbReference type="PhosphoSitePlus" id="O97980"/>
<dbReference type="BioMuta" id="HMHB1"/>
<dbReference type="PaxDb" id="9606-ENSP00000289448"/>
<dbReference type="DNASU" id="57824"/>
<dbReference type="Ensembl" id="ENST00000289448.4">
    <property type="protein sequence ID" value="ENSP00000289448.3"/>
    <property type="gene ID" value="ENSG00000158497.6"/>
</dbReference>
<dbReference type="GeneID" id="57824"/>
<dbReference type="KEGG" id="hsa:57824"/>
<dbReference type="MANE-Select" id="ENST00000289448.4">
    <property type="protein sequence ID" value="ENSP00000289448.3"/>
    <property type="RefSeq nucleotide sequence ID" value="NM_021182.3"/>
    <property type="RefSeq protein sequence ID" value="NP_067005.1"/>
</dbReference>
<dbReference type="UCSC" id="uc003lnj.5">
    <property type="organism name" value="human"/>
</dbReference>
<dbReference type="AGR" id="HGNC:29677"/>
<dbReference type="CTD" id="57824"/>
<dbReference type="DisGeNET" id="57824"/>
<dbReference type="GeneCards" id="HMHB1"/>
<dbReference type="HGNC" id="HGNC:29677">
    <property type="gene designation" value="HMHB1"/>
</dbReference>
<dbReference type="HPA" id="ENSG00000158497">
    <property type="expression patterns" value="Tissue enhanced (lymphoid tissue, testis)"/>
</dbReference>
<dbReference type="MIM" id="609961">
    <property type="type" value="gene"/>
</dbReference>
<dbReference type="neXtProt" id="NX_O97980"/>
<dbReference type="OpenTargets" id="ENSG00000158497"/>
<dbReference type="PharmGKB" id="PA147357973"/>
<dbReference type="eggNOG" id="ENOG502R1ZM">
    <property type="taxonomic scope" value="Eukaryota"/>
</dbReference>
<dbReference type="GeneTree" id="ENSGT00390000009781"/>
<dbReference type="HOGENOM" id="CLU_218939_0_0_1"/>
<dbReference type="InParanoid" id="O97980"/>
<dbReference type="OrthoDB" id="9525271at2759"/>
<dbReference type="PAN-GO" id="O97980">
    <property type="GO annotations" value="0 GO annotations based on evolutionary models"/>
</dbReference>
<dbReference type="PhylomeDB" id="O97980"/>
<dbReference type="TreeFam" id="TF341229"/>
<dbReference type="PathwayCommons" id="O97980"/>
<dbReference type="SignaLink" id="O97980"/>
<dbReference type="BioGRID-ORCS" id="57824">
    <property type="hits" value="23 hits in 969 CRISPR screens"/>
</dbReference>
<dbReference type="GenomeRNAi" id="57824"/>
<dbReference type="Pharos" id="O97980">
    <property type="development level" value="Tbio"/>
</dbReference>
<dbReference type="PRO" id="PR:O97980"/>
<dbReference type="Proteomes" id="UP000005640">
    <property type="component" value="Chromosome 5"/>
</dbReference>
<dbReference type="Bgee" id="ENSG00000158497">
    <property type="expression patterns" value="Expressed in male germ line stem cell (sensu Vertebrata) in testis and 74 other cell types or tissues"/>
</dbReference>
<dbReference type="ExpressionAtlas" id="O97980">
    <property type="expression patterns" value="baseline and differential"/>
</dbReference>
<dbReference type="GO" id="GO:0002250">
    <property type="term" value="P:adaptive immune response"/>
    <property type="evidence" value="ECO:0007669"/>
    <property type="project" value="UniProtKB-KW"/>
</dbReference>
<dbReference type="GO" id="GO:0071356">
    <property type="term" value="P:cellular response to tumor necrosis factor"/>
    <property type="evidence" value="ECO:0000314"/>
    <property type="project" value="UniProtKB"/>
</dbReference>
<dbReference type="GO" id="GO:0032729">
    <property type="term" value="P:positive regulation of type II interferon production"/>
    <property type="evidence" value="ECO:0000314"/>
    <property type="project" value="UniProtKB"/>
</dbReference>
<dbReference type="GO" id="GO:0010468">
    <property type="term" value="P:regulation of gene expression"/>
    <property type="evidence" value="ECO:0000314"/>
    <property type="project" value="UniProtKB"/>
</dbReference>
<proteinExistence type="evidence at protein level"/>
<protein>
    <recommendedName>
        <fullName>Minor histocompatibility protein HB-1</fullName>
    </recommendedName>
    <component>
        <recommendedName>
            <fullName>Minor histocompatibility antigen HB-1</fullName>
            <shortName>mHag HB-1</shortName>
        </recommendedName>
    </component>
</protein>
<accession>O97980</accession>
<accession>Q9MY25</accession>